<proteinExistence type="inferred from homology"/>
<comment type="catalytic activity">
    <reaction>
        <text>L-seryl-[protein] + ATP = O-phospho-L-seryl-[protein] + ADP + H(+)</text>
        <dbReference type="Rhea" id="RHEA:17989"/>
        <dbReference type="Rhea" id="RHEA-COMP:9863"/>
        <dbReference type="Rhea" id="RHEA-COMP:11604"/>
        <dbReference type="ChEBI" id="CHEBI:15378"/>
        <dbReference type="ChEBI" id="CHEBI:29999"/>
        <dbReference type="ChEBI" id="CHEBI:30616"/>
        <dbReference type="ChEBI" id="CHEBI:83421"/>
        <dbReference type="ChEBI" id="CHEBI:456216"/>
        <dbReference type="EC" id="2.7.11.1"/>
    </reaction>
</comment>
<comment type="catalytic activity">
    <reaction>
        <text>L-threonyl-[protein] + ATP = O-phospho-L-threonyl-[protein] + ADP + H(+)</text>
        <dbReference type="Rhea" id="RHEA:46608"/>
        <dbReference type="Rhea" id="RHEA-COMP:11060"/>
        <dbReference type="Rhea" id="RHEA-COMP:11605"/>
        <dbReference type="ChEBI" id="CHEBI:15378"/>
        <dbReference type="ChEBI" id="CHEBI:30013"/>
        <dbReference type="ChEBI" id="CHEBI:30616"/>
        <dbReference type="ChEBI" id="CHEBI:61977"/>
        <dbReference type="ChEBI" id="CHEBI:456216"/>
        <dbReference type="EC" id="2.7.11.1"/>
    </reaction>
</comment>
<comment type="similarity">
    <text evidence="5">Belongs to the protein kinase superfamily. TKL Ser/Thr protein kinase family. ROCO subfamily.</text>
</comment>
<protein>
    <recommendedName>
        <fullName>Probable serine/threonine-protein kinase roco11</fullName>
        <ecNumber>2.7.11.1</ecNumber>
    </recommendedName>
    <alternativeName>
        <fullName>Ras of complex proteins and C-terminal of roc 11</fullName>
    </alternativeName>
</protein>
<dbReference type="EC" id="2.7.11.1"/>
<dbReference type="EMBL" id="AY232273">
    <property type="protein sequence ID" value="AAO83656.1"/>
    <property type="molecule type" value="Genomic_DNA"/>
</dbReference>
<dbReference type="EMBL" id="AAFI02000004">
    <property type="protein sequence ID" value="EAL72907.1"/>
    <property type="molecule type" value="Genomic_DNA"/>
</dbReference>
<dbReference type="RefSeq" id="XP_647005.1">
    <property type="nucleotide sequence ID" value="XM_641913.1"/>
</dbReference>
<dbReference type="SMR" id="Q6XHA5"/>
<dbReference type="FunCoup" id="Q6XHA5">
    <property type="interactions" value="2"/>
</dbReference>
<dbReference type="STRING" id="44689.Q6XHA5"/>
<dbReference type="PaxDb" id="44689-DDB0191297"/>
<dbReference type="EnsemblProtists" id="EAL72907">
    <property type="protein sequence ID" value="EAL72907"/>
    <property type="gene ID" value="DDB_G0268636"/>
</dbReference>
<dbReference type="GeneID" id="8616698"/>
<dbReference type="KEGG" id="ddi:DDB_G0268636"/>
<dbReference type="dictyBase" id="DDB_G0268636">
    <property type="gene designation" value="roco11"/>
</dbReference>
<dbReference type="VEuPathDB" id="AmoebaDB:DDB_G0268636"/>
<dbReference type="eggNOG" id="KOG0192">
    <property type="taxonomic scope" value="Eukaryota"/>
</dbReference>
<dbReference type="eggNOG" id="KOG0619">
    <property type="taxonomic scope" value="Eukaryota"/>
</dbReference>
<dbReference type="HOGENOM" id="CLU_002809_0_0_1"/>
<dbReference type="InParanoid" id="Q6XHA5"/>
<dbReference type="OMA" id="DARHESD"/>
<dbReference type="PhylomeDB" id="Q6XHA5"/>
<dbReference type="Reactome" id="R-DDI-5675482">
    <property type="pathway name" value="Regulation of necroptotic cell death"/>
</dbReference>
<dbReference type="PRO" id="PR:Q6XHA5"/>
<dbReference type="Proteomes" id="UP000002195">
    <property type="component" value="Chromosome 1"/>
</dbReference>
<dbReference type="GO" id="GO:0005737">
    <property type="term" value="C:cytoplasm"/>
    <property type="evidence" value="ECO:0000318"/>
    <property type="project" value="GO_Central"/>
</dbReference>
<dbReference type="GO" id="GO:0005524">
    <property type="term" value="F:ATP binding"/>
    <property type="evidence" value="ECO:0007669"/>
    <property type="project" value="UniProtKB-KW"/>
</dbReference>
<dbReference type="GO" id="GO:0005525">
    <property type="term" value="F:GTP binding"/>
    <property type="evidence" value="ECO:0007669"/>
    <property type="project" value="UniProtKB-KW"/>
</dbReference>
<dbReference type="GO" id="GO:0004672">
    <property type="term" value="F:protein kinase activity"/>
    <property type="evidence" value="ECO:0000318"/>
    <property type="project" value="GO_Central"/>
</dbReference>
<dbReference type="GO" id="GO:0106310">
    <property type="term" value="F:protein serine kinase activity"/>
    <property type="evidence" value="ECO:0007669"/>
    <property type="project" value="RHEA"/>
</dbReference>
<dbReference type="GO" id="GO:0004674">
    <property type="term" value="F:protein serine/threonine kinase activity"/>
    <property type="evidence" value="ECO:0007669"/>
    <property type="project" value="UniProtKB-KW"/>
</dbReference>
<dbReference type="GO" id="GO:0004713">
    <property type="term" value="F:protein tyrosine kinase activity"/>
    <property type="evidence" value="ECO:0007669"/>
    <property type="project" value="InterPro"/>
</dbReference>
<dbReference type="GO" id="GO:0007165">
    <property type="term" value="P:signal transduction"/>
    <property type="evidence" value="ECO:0000318"/>
    <property type="project" value="GO_Central"/>
</dbReference>
<dbReference type="GO" id="GO:0036360">
    <property type="term" value="P:sorocarp stalk morphogenesis"/>
    <property type="evidence" value="ECO:0000315"/>
    <property type="project" value="dictyBase"/>
</dbReference>
<dbReference type="CDD" id="cd09914">
    <property type="entry name" value="RocCOR"/>
    <property type="match status" value="1"/>
</dbReference>
<dbReference type="CDD" id="cd13999">
    <property type="entry name" value="STKc_MAP3K-like"/>
    <property type="match status" value="1"/>
</dbReference>
<dbReference type="FunFam" id="1.10.510.10:FF:001859">
    <property type="entry name" value="Probable serine/threonine-protein kinase roco4"/>
    <property type="match status" value="1"/>
</dbReference>
<dbReference type="FunFam" id="3.30.70.1390:FF:000005">
    <property type="entry name" value="Probable serine/threonine-protein kinase roco4"/>
    <property type="match status" value="1"/>
</dbReference>
<dbReference type="Gene3D" id="3.40.50.300">
    <property type="entry name" value="P-loop containing nucleotide triphosphate hydrolases"/>
    <property type="match status" value="1"/>
</dbReference>
<dbReference type="Gene3D" id="3.30.200.20">
    <property type="entry name" value="Phosphorylase Kinase, domain 1"/>
    <property type="match status" value="1"/>
</dbReference>
<dbReference type="Gene3D" id="3.80.10.10">
    <property type="entry name" value="Ribonuclease Inhibitor"/>
    <property type="match status" value="1"/>
</dbReference>
<dbReference type="Gene3D" id="3.30.70.1390">
    <property type="entry name" value="ROC domain from the Parkinson's disease-associated leucine-rich repeat kinase 2"/>
    <property type="match status" value="1"/>
</dbReference>
<dbReference type="Gene3D" id="1.10.510.10">
    <property type="entry name" value="Transferase(Phosphotransferase) domain 1"/>
    <property type="match status" value="1"/>
</dbReference>
<dbReference type="Gene3D" id="1.10.10.10">
    <property type="entry name" value="Winged helix-like DNA-binding domain superfamily/Winged helix DNA-binding domain"/>
    <property type="match status" value="1"/>
</dbReference>
<dbReference type="InterPro" id="IPR032171">
    <property type="entry name" value="COR-A"/>
</dbReference>
<dbReference type="InterPro" id="IPR011009">
    <property type="entry name" value="Kinase-like_dom_sf"/>
</dbReference>
<dbReference type="InterPro" id="IPR001611">
    <property type="entry name" value="Leu-rich_rpt"/>
</dbReference>
<dbReference type="InterPro" id="IPR003591">
    <property type="entry name" value="Leu-rich_rpt_typical-subtyp"/>
</dbReference>
<dbReference type="InterPro" id="IPR032675">
    <property type="entry name" value="LRR_dom_sf"/>
</dbReference>
<dbReference type="InterPro" id="IPR027417">
    <property type="entry name" value="P-loop_NTPase"/>
</dbReference>
<dbReference type="InterPro" id="IPR000719">
    <property type="entry name" value="Prot_kinase_dom"/>
</dbReference>
<dbReference type="InterPro" id="IPR017441">
    <property type="entry name" value="Protein_kinase_ATP_BS"/>
</dbReference>
<dbReference type="InterPro" id="IPR020859">
    <property type="entry name" value="ROC"/>
</dbReference>
<dbReference type="InterPro" id="IPR001245">
    <property type="entry name" value="Ser-Thr/Tyr_kinase_cat_dom"/>
</dbReference>
<dbReference type="InterPro" id="IPR051681">
    <property type="entry name" value="Ser/Thr_Kinases-Pseudokinases"/>
</dbReference>
<dbReference type="InterPro" id="IPR020635">
    <property type="entry name" value="Tyr_kinase_cat_dom"/>
</dbReference>
<dbReference type="InterPro" id="IPR036388">
    <property type="entry name" value="WH-like_DNA-bd_sf"/>
</dbReference>
<dbReference type="PANTHER" id="PTHR44329:SF288">
    <property type="entry name" value="MITOGEN-ACTIVATED PROTEIN KINASE KINASE KINASE 20"/>
    <property type="match status" value="1"/>
</dbReference>
<dbReference type="PANTHER" id="PTHR44329">
    <property type="entry name" value="SERINE/THREONINE-PROTEIN KINASE TNNI3K-RELATED"/>
    <property type="match status" value="1"/>
</dbReference>
<dbReference type="Pfam" id="PF16095">
    <property type="entry name" value="COR-A"/>
    <property type="match status" value="1"/>
</dbReference>
<dbReference type="Pfam" id="PF07714">
    <property type="entry name" value="PK_Tyr_Ser-Thr"/>
    <property type="match status" value="1"/>
</dbReference>
<dbReference type="Pfam" id="PF08477">
    <property type="entry name" value="Roc"/>
    <property type="match status" value="1"/>
</dbReference>
<dbReference type="PRINTS" id="PR00109">
    <property type="entry name" value="TYRKINASE"/>
</dbReference>
<dbReference type="SMART" id="SM00369">
    <property type="entry name" value="LRR_TYP"/>
    <property type="match status" value="3"/>
</dbReference>
<dbReference type="SMART" id="SM00219">
    <property type="entry name" value="TyrKc"/>
    <property type="match status" value="1"/>
</dbReference>
<dbReference type="SUPFAM" id="SSF52058">
    <property type="entry name" value="L domain-like"/>
    <property type="match status" value="1"/>
</dbReference>
<dbReference type="SUPFAM" id="SSF52540">
    <property type="entry name" value="P-loop containing nucleoside triphosphate hydrolases"/>
    <property type="match status" value="1"/>
</dbReference>
<dbReference type="SUPFAM" id="SSF56112">
    <property type="entry name" value="Protein kinase-like (PK-like)"/>
    <property type="match status" value="1"/>
</dbReference>
<dbReference type="PROSITE" id="PS51450">
    <property type="entry name" value="LRR"/>
    <property type="match status" value="3"/>
</dbReference>
<dbReference type="PROSITE" id="PS00107">
    <property type="entry name" value="PROTEIN_KINASE_ATP"/>
    <property type="match status" value="1"/>
</dbReference>
<dbReference type="PROSITE" id="PS50011">
    <property type="entry name" value="PROTEIN_KINASE_DOM"/>
    <property type="match status" value="1"/>
</dbReference>
<dbReference type="PROSITE" id="PS51424">
    <property type="entry name" value="ROC"/>
    <property type="match status" value="1"/>
</dbReference>
<keyword id="KW-0067">ATP-binding</keyword>
<keyword id="KW-0342">GTP-binding</keyword>
<keyword id="KW-0418">Kinase</keyword>
<keyword id="KW-0433">Leucine-rich repeat</keyword>
<keyword id="KW-0547">Nucleotide-binding</keyword>
<keyword id="KW-1185">Reference proteome</keyword>
<keyword id="KW-0677">Repeat</keyword>
<keyword id="KW-0723">Serine/threonine-protein kinase</keyword>
<keyword id="KW-0808">Transferase</keyword>
<organism>
    <name type="scientific">Dictyostelium discoideum</name>
    <name type="common">Social amoeba</name>
    <dbReference type="NCBI Taxonomy" id="44689"/>
    <lineage>
        <taxon>Eukaryota</taxon>
        <taxon>Amoebozoa</taxon>
        <taxon>Evosea</taxon>
        <taxon>Eumycetozoa</taxon>
        <taxon>Dictyostelia</taxon>
        <taxon>Dictyosteliales</taxon>
        <taxon>Dictyosteliaceae</taxon>
        <taxon>Dictyostelium</taxon>
    </lineage>
</organism>
<name>ROC11_DICDI</name>
<evidence type="ECO:0000255" key="1"/>
<evidence type="ECO:0000255" key="2">
    <source>
        <dbReference type="PROSITE-ProRule" id="PRU00159"/>
    </source>
</evidence>
<evidence type="ECO:0000255" key="3">
    <source>
        <dbReference type="PROSITE-ProRule" id="PRU00758"/>
    </source>
</evidence>
<evidence type="ECO:0000256" key="4">
    <source>
        <dbReference type="SAM" id="MobiDB-lite"/>
    </source>
</evidence>
<evidence type="ECO:0000305" key="5"/>
<feature type="chain" id="PRO_0000358897" description="Probable serine/threonine-protein kinase roco11">
    <location>
        <begin position="1"/>
        <end position="1487"/>
    </location>
</feature>
<feature type="repeat" description="LRR 1">
    <location>
        <begin position="295"/>
        <end position="316"/>
    </location>
</feature>
<feature type="repeat" description="LRR 2">
    <location>
        <begin position="318"/>
        <end position="340"/>
    </location>
</feature>
<feature type="repeat" description="LRR 3">
    <location>
        <begin position="341"/>
        <end position="362"/>
    </location>
</feature>
<feature type="domain" description="Roc" evidence="3">
    <location>
        <begin position="379"/>
        <end position="564"/>
    </location>
</feature>
<feature type="domain" description="COR" evidence="1">
    <location>
        <begin position="678"/>
        <end position="872"/>
    </location>
</feature>
<feature type="domain" description="Protein kinase" evidence="2">
    <location>
        <begin position="1185"/>
        <end position="1452"/>
    </location>
</feature>
<feature type="region of interest" description="Disordered" evidence="4">
    <location>
        <begin position="108"/>
        <end position="134"/>
    </location>
</feature>
<feature type="region of interest" description="Small GTPase-like">
    <location>
        <begin position="379"/>
        <end position="564"/>
    </location>
</feature>
<feature type="region of interest" description="Disordered" evidence="4">
    <location>
        <begin position="891"/>
        <end position="1007"/>
    </location>
</feature>
<feature type="region of interest" description="Disordered" evidence="4">
    <location>
        <begin position="1464"/>
        <end position="1487"/>
    </location>
</feature>
<feature type="compositionally biased region" description="Basic residues" evidence="4">
    <location>
        <begin position="116"/>
        <end position="125"/>
    </location>
</feature>
<feature type="compositionally biased region" description="Low complexity" evidence="4">
    <location>
        <begin position="897"/>
        <end position="931"/>
    </location>
</feature>
<feature type="compositionally biased region" description="Polar residues" evidence="4">
    <location>
        <begin position="932"/>
        <end position="950"/>
    </location>
</feature>
<feature type="compositionally biased region" description="Low complexity" evidence="4">
    <location>
        <begin position="951"/>
        <end position="1007"/>
    </location>
</feature>
<feature type="active site" description="Proton acceptor" evidence="2">
    <location>
        <position position="1313"/>
    </location>
</feature>
<feature type="binding site" evidence="3">
    <location>
        <begin position="392"/>
        <end position="399"/>
    </location>
    <ligand>
        <name>GTP</name>
        <dbReference type="ChEBI" id="CHEBI:37565"/>
    </ligand>
</feature>
<feature type="binding site" evidence="3">
    <location>
        <begin position="448"/>
        <end position="452"/>
    </location>
    <ligand>
        <name>GTP</name>
        <dbReference type="ChEBI" id="CHEBI:37565"/>
    </ligand>
</feature>
<feature type="binding site" evidence="3">
    <location>
        <begin position="507"/>
        <end position="510"/>
    </location>
    <ligand>
        <name>GTP</name>
        <dbReference type="ChEBI" id="CHEBI:37565"/>
    </ligand>
</feature>
<feature type="binding site" evidence="2">
    <location>
        <begin position="1191"/>
        <end position="1199"/>
    </location>
    <ligand>
        <name>ATP</name>
        <dbReference type="ChEBI" id="CHEBI:30616"/>
    </ligand>
</feature>
<feature type="binding site" evidence="2">
    <location>
        <position position="1216"/>
    </location>
    <ligand>
        <name>ATP</name>
        <dbReference type="ChEBI" id="CHEBI:30616"/>
    </ligand>
</feature>
<reference key="1">
    <citation type="journal article" date="2003" name="Biochim. Biophys. Acta">
        <title>Roc, a Ras/GTPase domain in complex proteins.</title>
        <authorList>
            <person name="Bosgraaf L."/>
            <person name="van Haastert P.J.M."/>
        </authorList>
    </citation>
    <scope>NUCLEOTIDE SEQUENCE [GENOMIC DNA]</scope>
</reference>
<reference key="2">
    <citation type="journal article" date="2005" name="Nature">
        <title>The genome of the social amoeba Dictyostelium discoideum.</title>
        <authorList>
            <person name="Eichinger L."/>
            <person name="Pachebat J.A."/>
            <person name="Gloeckner G."/>
            <person name="Rajandream M.A."/>
            <person name="Sucgang R."/>
            <person name="Berriman M."/>
            <person name="Song J."/>
            <person name="Olsen R."/>
            <person name="Szafranski K."/>
            <person name="Xu Q."/>
            <person name="Tunggal B."/>
            <person name="Kummerfeld S."/>
            <person name="Madera M."/>
            <person name="Konfortov B.A."/>
            <person name="Rivero F."/>
            <person name="Bankier A.T."/>
            <person name="Lehmann R."/>
            <person name="Hamlin N."/>
            <person name="Davies R."/>
            <person name="Gaudet P."/>
            <person name="Fey P."/>
            <person name="Pilcher K."/>
            <person name="Chen G."/>
            <person name="Saunders D."/>
            <person name="Sodergren E.J."/>
            <person name="Davis P."/>
            <person name="Kerhornou A."/>
            <person name="Nie X."/>
            <person name="Hall N."/>
            <person name="Anjard C."/>
            <person name="Hemphill L."/>
            <person name="Bason N."/>
            <person name="Farbrother P."/>
            <person name="Desany B."/>
            <person name="Just E."/>
            <person name="Morio T."/>
            <person name="Rost R."/>
            <person name="Churcher C.M."/>
            <person name="Cooper J."/>
            <person name="Haydock S."/>
            <person name="van Driessche N."/>
            <person name="Cronin A."/>
            <person name="Goodhead I."/>
            <person name="Muzny D.M."/>
            <person name="Mourier T."/>
            <person name="Pain A."/>
            <person name="Lu M."/>
            <person name="Harper D."/>
            <person name="Lindsay R."/>
            <person name="Hauser H."/>
            <person name="James K.D."/>
            <person name="Quiles M."/>
            <person name="Madan Babu M."/>
            <person name="Saito T."/>
            <person name="Buchrieser C."/>
            <person name="Wardroper A."/>
            <person name="Felder M."/>
            <person name="Thangavelu M."/>
            <person name="Johnson D."/>
            <person name="Knights A."/>
            <person name="Loulseged H."/>
            <person name="Mungall K.L."/>
            <person name="Oliver K."/>
            <person name="Price C."/>
            <person name="Quail M.A."/>
            <person name="Urushihara H."/>
            <person name="Hernandez J."/>
            <person name="Rabbinowitsch E."/>
            <person name="Steffen D."/>
            <person name="Sanders M."/>
            <person name="Ma J."/>
            <person name="Kohara Y."/>
            <person name="Sharp S."/>
            <person name="Simmonds M.N."/>
            <person name="Spiegler S."/>
            <person name="Tivey A."/>
            <person name="Sugano S."/>
            <person name="White B."/>
            <person name="Walker D."/>
            <person name="Woodward J.R."/>
            <person name="Winckler T."/>
            <person name="Tanaka Y."/>
            <person name="Shaulsky G."/>
            <person name="Schleicher M."/>
            <person name="Weinstock G.M."/>
            <person name="Rosenthal A."/>
            <person name="Cox E.C."/>
            <person name="Chisholm R.L."/>
            <person name="Gibbs R.A."/>
            <person name="Loomis W.F."/>
            <person name="Platzer M."/>
            <person name="Kay R.R."/>
            <person name="Williams J.G."/>
            <person name="Dear P.H."/>
            <person name="Noegel A.A."/>
            <person name="Barrell B.G."/>
            <person name="Kuspa A."/>
        </authorList>
    </citation>
    <scope>NUCLEOTIDE SEQUENCE [LARGE SCALE GENOMIC DNA]</scope>
    <source>
        <strain>AX4</strain>
    </source>
</reference>
<gene>
    <name type="primary">roco11</name>
    <name type="ORF">DDB_G0268636</name>
</gene>
<accession>Q6XHA5</accession>
<accession>Q55EL5</accession>
<sequence>METSQIRNGFNKVEVDVVGPLKDLLVRVMKNINTPFKILNETFKINYCDQQETKTKSSFYIQTLDANDKSSLELTKSAIKNIQMQQQQQQQQQQQQQQQQHHDIFQFTQPSSSHNHSNHHHHHHQQQLQQQQQQQLQQQMKTPKLLFFIVMSVGVGKSYIKNIKEEAGTIPILEWFTNYIRSWEEVFKLTSNQVTSHIKRQLLTKACTTGNINLLDEILLSGISKEQIKETQTIGHGIILKSLIVNNLDSIVVSGSMSLLGAVIDNDNDKKGSSLILSKLNLNLFPKSIITACFNLAELDLSYNNIKEIPKEICQLKHLKILNMNNNQLDDLPLELANLTNLKYLAVQDNPLNKFPHHIIEQGTKRTLVFLKNIIEGKKSETWNKVKLMFVGQEGVGKSSLCKALMGSRRRSSSSFAAELQKSGDTISTEGVKIQSIKGKKIDFYAWDFGGQQVFYPTHQFFLTNQALYLLVFKLTDPNFAERVNYWTLQIKANSGLSVPMIFLVGTHCDACTPEQLSSAEQILKENFVKYSRIRQNAISFVSCTNGTGIKELKKILTNEAEKSNLIKSNIPGSYLILEQRLTDRGANSSRILINQNNINQNNNNNNNNNNHNNCNNNENCTTTAATAGTTTMTSTTTTTTNYSNENILNTSSNSLIALFTRSNSNSNLSNNYQKPLVNQKYIDYNDFERECKLSHLAQEEIQGATEFLHNMGIILHYDTPILRSLVVLDPQWLADVMSSLITFSHNWIKNGILNHSELVSIWSGKYDQSIWPSLLKLLEKFEVSYELPNEFPSRSLIPSLLPEEPIDRIQEIKEKLWIPLPEAIESKRVQIFGCQYNFDFMPLGFFPRLLLRILLIKGIDIKTYWANGILLDILTTEDIKIQKLNHKKHSILPNNSSSTSSSTSSSTSSSTSSSSSSSTSSSSTSTTTTTVQIQSSPFGNSTTIVNKLTNIDNNNNNNNNNNNNNNNNNNINNNNNNNNNNNNNNNNNNNNNNNNNNNNNNNNNNIKNIINNFENQNNLNNIITNNFGGKFEIIKKNDFESPLSSKKPKHQVLVTFKNQKSFESKDKDTYKLNVEIRSFNVSNNNDKDFLASLFFQQLLSTIDTLLSGSYGGLKVTRLIPCIHCIEKDPHSEPHLFDINSCISQLLLGKSQLVCGKDSTTPVRIDYIAPDLSIKKIPILLEDQVVCEEQIGVGGFGLVHKGKLILQDKSLVVAIKSYIVGNSSASDIIRKFQEFHHEMYIMSSLNHLNIVKLFGSMQNPPRMVMEFAPHGDLYHFLEKKKNIKWSFKVRLMLDIAKGIEYLQNQNPPIVHRDLRSPNIFLFSLDENAPVCAKVADFGLSQQSLYSVSGLLGNFQWMAPETIGAEESYTEKIDTYSFSMILFTILTGECPFDEFTSFGKMEFIRKIREEDLRPTIPSDCPPTISNLIELCWSGDPKKRPHFSYIVKELTNFYYNLNLSPIPEQKSINDKSPHPDLISNGVPKLQIAK</sequence>